<accession>B7NKY7</accession>
<evidence type="ECO:0000255" key="1">
    <source>
        <dbReference type="HAMAP-Rule" id="MF_01064"/>
    </source>
</evidence>
<organism>
    <name type="scientific">Escherichia coli O7:K1 (strain IAI39 / ExPEC)</name>
    <dbReference type="NCBI Taxonomy" id="585057"/>
    <lineage>
        <taxon>Bacteria</taxon>
        <taxon>Pseudomonadati</taxon>
        <taxon>Pseudomonadota</taxon>
        <taxon>Gammaproteobacteria</taxon>
        <taxon>Enterobacterales</taxon>
        <taxon>Enterobacteriaceae</taxon>
        <taxon>Escherichia</taxon>
    </lineage>
</organism>
<proteinExistence type="inferred from homology"/>
<name>YAEP_ECO7I</name>
<feature type="chain" id="PRO_1000136534" description="UPF0253 protein YaeP">
    <location>
        <begin position="1"/>
        <end position="66"/>
    </location>
</feature>
<gene>
    <name evidence="1" type="primary">yaeP</name>
    <name type="ordered locus">ECIAI39_0458</name>
</gene>
<sequence>MEKYCELIRKRYAEIASGDLGYVPDALGCVLKVLNEMAADDALSEAVREKAAYAAANLLVSDYVNE</sequence>
<comment type="similarity">
    <text evidence="1">Belongs to the UPF0253 family.</text>
</comment>
<protein>
    <recommendedName>
        <fullName evidence="1">UPF0253 protein YaeP</fullName>
    </recommendedName>
</protein>
<dbReference type="EMBL" id="CU928164">
    <property type="protein sequence ID" value="CAR16596.1"/>
    <property type="molecule type" value="Genomic_DNA"/>
</dbReference>
<dbReference type="RefSeq" id="WP_000417058.1">
    <property type="nucleotide sequence ID" value="NC_011750.1"/>
</dbReference>
<dbReference type="RefSeq" id="YP_002406490.1">
    <property type="nucleotide sequence ID" value="NC_011750.1"/>
</dbReference>
<dbReference type="SMR" id="B7NKY7"/>
<dbReference type="STRING" id="585057.ECIAI39_0458"/>
<dbReference type="KEGG" id="ect:ECIAI39_0458"/>
<dbReference type="PATRIC" id="fig|585057.6.peg.488"/>
<dbReference type="HOGENOM" id="CLU_190008_0_0_6"/>
<dbReference type="Proteomes" id="UP000000749">
    <property type="component" value="Chromosome"/>
</dbReference>
<dbReference type="HAMAP" id="MF_01064">
    <property type="entry name" value="UPF0253"/>
    <property type="match status" value="1"/>
</dbReference>
<dbReference type="InterPro" id="IPR009624">
    <property type="entry name" value="UPF0253"/>
</dbReference>
<dbReference type="NCBIfam" id="NF003436">
    <property type="entry name" value="PRK04964.1"/>
    <property type="match status" value="1"/>
</dbReference>
<dbReference type="Pfam" id="PF06786">
    <property type="entry name" value="UPF0253"/>
    <property type="match status" value="1"/>
</dbReference>
<reference key="1">
    <citation type="journal article" date="2009" name="PLoS Genet.">
        <title>Organised genome dynamics in the Escherichia coli species results in highly diverse adaptive paths.</title>
        <authorList>
            <person name="Touchon M."/>
            <person name="Hoede C."/>
            <person name="Tenaillon O."/>
            <person name="Barbe V."/>
            <person name="Baeriswyl S."/>
            <person name="Bidet P."/>
            <person name="Bingen E."/>
            <person name="Bonacorsi S."/>
            <person name="Bouchier C."/>
            <person name="Bouvet O."/>
            <person name="Calteau A."/>
            <person name="Chiapello H."/>
            <person name="Clermont O."/>
            <person name="Cruveiller S."/>
            <person name="Danchin A."/>
            <person name="Diard M."/>
            <person name="Dossat C."/>
            <person name="Karoui M.E."/>
            <person name="Frapy E."/>
            <person name="Garry L."/>
            <person name="Ghigo J.M."/>
            <person name="Gilles A.M."/>
            <person name="Johnson J."/>
            <person name="Le Bouguenec C."/>
            <person name="Lescat M."/>
            <person name="Mangenot S."/>
            <person name="Martinez-Jehanne V."/>
            <person name="Matic I."/>
            <person name="Nassif X."/>
            <person name="Oztas S."/>
            <person name="Petit M.A."/>
            <person name="Pichon C."/>
            <person name="Rouy Z."/>
            <person name="Ruf C.S."/>
            <person name="Schneider D."/>
            <person name="Tourret J."/>
            <person name="Vacherie B."/>
            <person name="Vallenet D."/>
            <person name="Medigue C."/>
            <person name="Rocha E.P.C."/>
            <person name="Denamur E."/>
        </authorList>
    </citation>
    <scope>NUCLEOTIDE SEQUENCE [LARGE SCALE GENOMIC DNA]</scope>
    <source>
        <strain>IAI39 / ExPEC</strain>
    </source>
</reference>